<reference key="1">
    <citation type="submission" date="2009-02" db="EMBL/GenBank/DDBJ databases">
        <title>Vibrio splendidus str. LGP32 complete genome.</title>
        <authorList>
            <person name="Mazel D."/>
            <person name="Le Roux F."/>
        </authorList>
    </citation>
    <scope>NUCLEOTIDE SEQUENCE [LARGE SCALE GENOMIC DNA]</scope>
    <source>
        <strain>LGP32</strain>
    </source>
</reference>
<name>PYRF_VIBA3</name>
<sequence length="231" mass="24929">MNDQKIIVALDYDNQADALAFVDRIDPASCRLKVGKEMFTLFGPEFVRELHKRGFSVFLDLKFHDIPNTCSKAVRAAAEMGVWMVNVHASGGERMMTASREILEPYGKDRPLLIGVTVLTSMEQSDLAGIGLDLEPQQQVMRLASLTKNSGLDGVVCSAQEASLLKGALGQEFKLVTPGIRPVGADVGDQKRIMTPSKAIESGSDYLVIGRPITQAIDPAAVLAEINGTLA</sequence>
<accession>B7VH29</accession>
<proteinExistence type="inferred from homology"/>
<gene>
    <name evidence="1" type="primary">pyrF</name>
    <name type="ordered locus">VS_2053</name>
</gene>
<evidence type="ECO:0000255" key="1">
    <source>
        <dbReference type="HAMAP-Rule" id="MF_01200"/>
    </source>
</evidence>
<dbReference type="EC" id="4.1.1.23" evidence="1"/>
<dbReference type="EMBL" id="FM954972">
    <property type="protein sequence ID" value="CAV19229.1"/>
    <property type="molecule type" value="Genomic_DNA"/>
</dbReference>
<dbReference type="SMR" id="B7VH29"/>
<dbReference type="STRING" id="575788.VS_2053"/>
<dbReference type="KEGG" id="vsp:VS_2053"/>
<dbReference type="PATRIC" id="fig|575788.5.peg.3333"/>
<dbReference type="eggNOG" id="COG0284">
    <property type="taxonomic scope" value="Bacteria"/>
</dbReference>
<dbReference type="HOGENOM" id="CLU_067069_0_0_6"/>
<dbReference type="UniPathway" id="UPA00070">
    <property type="reaction ID" value="UER00120"/>
</dbReference>
<dbReference type="Proteomes" id="UP000009100">
    <property type="component" value="Chromosome 1"/>
</dbReference>
<dbReference type="GO" id="GO:0005829">
    <property type="term" value="C:cytosol"/>
    <property type="evidence" value="ECO:0007669"/>
    <property type="project" value="TreeGrafter"/>
</dbReference>
<dbReference type="GO" id="GO:0004590">
    <property type="term" value="F:orotidine-5'-phosphate decarboxylase activity"/>
    <property type="evidence" value="ECO:0007669"/>
    <property type="project" value="UniProtKB-UniRule"/>
</dbReference>
<dbReference type="GO" id="GO:0006207">
    <property type="term" value="P:'de novo' pyrimidine nucleobase biosynthetic process"/>
    <property type="evidence" value="ECO:0007669"/>
    <property type="project" value="InterPro"/>
</dbReference>
<dbReference type="GO" id="GO:0044205">
    <property type="term" value="P:'de novo' UMP biosynthetic process"/>
    <property type="evidence" value="ECO:0007669"/>
    <property type="project" value="UniProtKB-UniRule"/>
</dbReference>
<dbReference type="CDD" id="cd04725">
    <property type="entry name" value="OMP_decarboxylase_like"/>
    <property type="match status" value="1"/>
</dbReference>
<dbReference type="FunFam" id="3.20.20.70:FF:000015">
    <property type="entry name" value="Orotidine 5'-phosphate decarboxylase"/>
    <property type="match status" value="1"/>
</dbReference>
<dbReference type="Gene3D" id="3.20.20.70">
    <property type="entry name" value="Aldolase class I"/>
    <property type="match status" value="1"/>
</dbReference>
<dbReference type="HAMAP" id="MF_01200_B">
    <property type="entry name" value="OMPdecase_type1_B"/>
    <property type="match status" value="1"/>
</dbReference>
<dbReference type="InterPro" id="IPR013785">
    <property type="entry name" value="Aldolase_TIM"/>
</dbReference>
<dbReference type="InterPro" id="IPR014732">
    <property type="entry name" value="OMPdecase"/>
</dbReference>
<dbReference type="InterPro" id="IPR018089">
    <property type="entry name" value="OMPdecase_AS"/>
</dbReference>
<dbReference type="InterPro" id="IPR047596">
    <property type="entry name" value="OMPdecase_bac"/>
</dbReference>
<dbReference type="InterPro" id="IPR001754">
    <property type="entry name" value="OMPdeCOase_dom"/>
</dbReference>
<dbReference type="InterPro" id="IPR011060">
    <property type="entry name" value="RibuloseP-bd_barrel"/>
</dbReference>
<dbReference type="NCBIfam" id="NF001273">
    <property type="entry name" value="PRK00230.1"/>
    <property type="match status" value="1"/>
</dbReference>
<dbReference type="NCBIfam" id="TIGR01740">
    <property type="entry name" value="pyrF"/>
    <property type="match status" value="1"/>
</dbReference>
<dbReference type="PANTHER" id="PTHR32119">
    <property type="entry name" value="OROTIDINE 5'-PHOSPHATE DECARBOXYLASE"/>
    <property type="match status" value="1"/>
</dbReference>
<dbReference type="PANTHER" id="PTHR32119:SF2">
    <property type="entry name" value="OROTIDINE 5'-PHOSPHATE DECARBOXYLASE"/>
    <property type="match status" value="1"/>
</dbReference>
<dbReference type="Pfam" id="PF00215">
    <property type="entry name" value="OMPdecase"/>
    <property type="match status" value="1"/>
</dbReference>
<dbReference type="SMART" id="SM00934">
    <property type="entry name" value="OMPdecase"/>
    <property type="match status" value="1"/>
</dbReference>
<dbReference type="SUPFAM" id="SSF51366">
    <property type="entry name" value="Ribulose-phoshate binding barrel"/>
    <property type="match status" value="1"/>
</dbReference>
<dbReference type="PROSITE" id="PS00156">
    <property type="entry name" value="OMPDECASE"/>
    <property type="match status" value="1"/>
</dbReference>
<feature type="chain" id="PRO_1000164587" description="Orotidine 5'-phosphate decarboxylase">
    <location>
        <begin position="1"/>
        <end position="231"/>
    </location>
</feature>
<feature type="active site" description="Proton donor" evidence="1">
    <location>
        <position position="62"/>
    </location>
</feature>
<feature type="binding site" evidence="1">
    <location>
        <position position="11"/>
    </location>
    <ligand>
        <name>substrate</name>
    </ligand>
</feature>
<feature type="binding site" evidence="1">
    <location>
        <position position="33"/>
    </location>
    <ligand>
        <name>substrate</name>
    </ligand>
</feature>
<feature type="binding site" evidence="1">
    <location>
        <begin position="60"/>
        <end position="69"/>
    </location>
    <ligand>
        <name>substrate</name>
    </ligand>
</feature>
<feature type="binding site" evidence="1">
    <location>
        <position position="120"/>
    </location>
    <ligand>
        <name>substrate</name>
    </ligand>
</feature>
<feature type="binding site" evidence="1">
    <location>
        <position position="181"/>
    </location>
    <ligand>
        <name>substrate</name>
    </ligand>
</feature>
<feature type="binding site" evidence="1">
    <location>
        <position position="190"/>
    </location>
    <ligand>
        <name>substrate</name>
    </ligand>
</feature>
<feature type="binding site" evidence="1">
    <location>
        <position position="210"/>
    </location>
    <ligand>
        <name>substrate</name>
    </ligand>
</feature>
<feature type="binding site" evidence="1">
    <location>
        <position position="211"/>
    </location>
    <ligand>
        <name>substrate</name>
    </ligand>
</feature>
<protein>
    <recommendedName>
        <fullName evidence="1">Orotidine 5'-phosphate decarboxylase</fullName>
        <ecNumber evidence="1">4.1.1.23</ecNumber>
    </recommendedName>
    <alternativeName>
        <fullName evidence="1">OMP decarboxylase</fullName>
        <shortName evidence="1">OMPDCase</shortName>
        <shortName evidence="1">OMPdecase</shortName>
    </alternativeName>
</protein>
<keyword id="KW-0210">Decarboxylase</keyword>
<keyword id="KW-0456">Lyase</keyword>
<keyword id="KW-0665">Pyrimidine biosynthesis</keyword>
<organism>
    <name type="scientific">Vibrio atlanticus (strain LGP32)</name>
    <name type="common">Vibrio splendidus (strain Mel32)</name>
    <dbReference type="NCBI Taxonomy" id="575788"/>
    <lineage>
        <taxon>Bacteria</taxon>
        <taxon>Pseudomonadati</taxon>
        <taxon>Pseudomonadota</taxon>
        <taxon>Gammaproteobacteria</taxon>
        <taxon>Vibrionales</taxon>
        <taxon>Vibrionaceae</taxon>
        <taxon>Vibrio</taxon>
    </lineage>
</organism>
<comment type="function">
    <text evidence="1">Catalyzes the decarboxylation of orotidine 5'-monophosphate (OMP) to uridine 5'-monophosphate (UMP).</text>
</comment>
<comment type="catalytic activity">
    <reaction evidence="1">
        <text>orotidine 5'-phosphate + H(+) = UMP + CO2</text>
        <dbReference type="Rhea" id="RHEA:11596"/>
        <dbReference type="ChEBI" id="CHEBI:15378"/>
        <dbReference type="ChEBI" id="CHEBI:16526"/>
        <dbReference type="ChEBI" id="CHEBI:57538"/>
        <dbReference type="ChEBI" id="CHEBI:57865"/>
        <dbReference type="EC" id="4.1.1.23"/>
    </reaction>
</comment>
<comment type="pathway">
    <text evidence="1">Pyrimidine metabolism; UMP biosynthesis via de novo pathway; UMP from orotate: step 2/2.</text>
</comment>
<comment type="subunit">
    <text evidence="1">Homodimer.</text>
</comment>
<comment type="similarity">
    <text evidence="1">Belongs to the OMP decarboxylase family. Type 1 subfamily.</text>
</comment>